<comment type="function">
    <text evidence="1">Insecticidal neurotoxin that induces an irreversible spastic paralysis when injected into insects. Modifies presynaptic voltage-gated sodium channels (Nav), causing them to open at the normal resting potential of the nerve. This leads to spontaneous release of neurotransmitter and repetitive action potentials in motor neurons.</text>
</comment>
<comment type="subcellular location">
    <subcellularLocation>
        <location evidence="1">Secreted</location>
    </subcellularLocation>
</comment>
<comment type="tissue specificity">
    <text evidence="4">Expressed by the venom gland.</text>
</comment>
<comment type="domain">
    <text>The presence of a 'disulfide through disulfide knot' structurally defines this protein as a knottin.</text>
</comment>
<comment type="toxic dose">
    <text evidence="1">LD(50) is 48 +-11 mg/kg into third stadium larvae of M.sexta.</text>
</comment>
<comment type="similarity">
    <text evidence="3">Belongs to the neurotoxin 07 (Beta/delta-agtx) family. 03 (aga-4) subfamily. Aga sub-subfamily.</text>
</comment>
<accession>P11061</accession>
<keyword id="KW-0027">Amidation</keyword>
<keyword id="KW-0903">Direct protein sequencing</keyword>
<keyword id="KW-1015">Disulfide bond</keyword>
<keyword id="KW-0872">Ion channel impairing toxin</keyword>
<keyword id="KW-0960">Knottin</keyword>
<keyword id="KW-0528">Neurotoxin</keyword>
<keyword id="KW-0638">Presynaptic neurotoxin</keyword>
<keyword id="KW-0964">Secreted</keyword>
<keyword id="KW-0800">Toxin</keyword>
<keyword id="KW-0738">Voltage-gated sodium channel impairing toxin</keyword>
<evidence type="ECO:0000269" key="1">
    <source>
    </source>
</evidence>
<evidence type="ECO:0000303" key="2">
    <source>
    </source>
</evidence>
<evidence type="ECO:0000305" key="3"/>
<evidence type="ECO:0000305" key="4">
    <source>
    </source>
</evidence>
<proteinExistence type="evidence at protein level"/>
<protein>
    <recommendedName>
        <fullName evidence="3">Mu-agatoxin-Aa1e</fullName>
        <shortName evidence="3">Mu-AGTX-Aa1e</shortName>
    </recommendedName>
    <alternativeName>
        <fullName evidence="2">Mu-agatoxin V</fullName>
        <shortName evidence="2">Mu-Aga V</shortName>
    </alternativeName>
    <alternativeName>
        <fullName evidence="3">Mu-agatoxin-5</fullName>
    </alternativeName>
</protein>
<organism>
    <name type="scientific">Agelenopsis aperta</name>
    <name type="common">North American funnel-web spider</name>
    <name type="synonym">Agelenopsis gertschi</name>
    <dbReference type="NCBI Taxonomy" id="6908"/>
    <lineage>
        <taxon>Eukaryota</taxon>
        <taxon>Metazoa</taxon>
        <taxon>Ecdysozoa</taxon>
        <taxon>Arthropoda</taxon>
        <taxon>Chelicerata</taxon>
        <taxon>Arachnida</taxon>
        <taxon>Araneae</taxon>
        <taxon>Araneomorphae</taxon>
        <taxon>Entelegynae</taxon>
        <taxon>Agelenidae</taxon>
        <taxon>Agelenopsis</taxon>
    </lineage>
</organism>
<dbReference type="PIR" id="E32038">
    <property type="entry name" value="E32038"/>
</dbReference>
<dbReference type="SMR" id="P11061"/>
<dbReference type="ArachnoServer" id="AS000383">
    <property type="toxin name" value="mu-agatoxin-Aa1e"/>
</dbReference>
<dbReference type="GO" id="GO:0005576">
    <property type="term" value="C:extracellular region"/>
    <property type="evidence" value="ECO:0007669"/>
    <property type="project" value="UniProtKB-SubCell"/>
</dbReference>
<dbReference type="GO" id="GO:0044231">
    <property type="term" value="C:host cell presynaptic membrane"/>
    <property type="evidence" value="ECO:0007669"/>
    <property type="project" value="UniProtKB-KW"/>
</dbReference>
<dbReference type="GO" id="GO:0017080">
    <property type="term" value="F:sodium channel regulator activity"/>
    <property type="evidence" value="ECO:0007669"/>
    <property type="project" value="UniProtKB-KW"/>
</dbReference>
<dbReference type="GO" id="GO:0090729">
    <property type="term" value="F:toxin activity"/>
    <property type="evidence" value="ECO:0007669"/>
    <property type="project" value="UniProtKB-KW"/>
</dbReference>
<dbReference type="InterPro" id="IPR016328">
    <property type="entry name" value="Beta/delta-agatoxin_fam"/>
</dbReference>
<dbReference type="Pfam" id="PF05980">
    <property type="entry name" value="Toxin_7"/>
    <property type="match status" value="1"/>
</dbReference>
<dbReference type="PIRSF" id="PIRSF001882">
    <property type="entry name" value="Curtatoxin"/>
    <property type="match status" value="1"/>
</dbReference>
<dbReference type="SUPFAM" id="SSF57059">
    <property type="entry name" value="omega toxin-like"/>
    <property type="match status" value="1"/>
</dbReference>
<dbReference type="PROSITE" id="PS60015">
    <property type="entry name" value="MU_AGATOXIN"/>
    <property type="match status" value="1"/>
</dbReference>
<reference key="1">
    <citation type="journal article" date="1989" name="J. Biol. Chem.">
        <title>Purification and characterization of two classes of neurotoxins from the funnel web spider, Agelenopsis aperta.</title>
        <authorList>
            <person name="Skinner W.S."/>
            <person name="Adams M.E."/>
            <person name="Quistad G.B."/>
            <person name="Kataoka H."/>
            <person name="Cesarin B.J."/>
            <person name="Enderlin F.E."/>
            <person name="Schooley D.A."/>
        </authorList>
    </citation>
    <scope>PROTEIN SEQUENCE</scope>
    <scope>AMIDATION AT ASN-37</scope>
    <scope>FUNCTION</scope>
    <scope>SUBCELLULAR LOCATION</scope>
    <scope>TOXIC DOSE</scope>
    <scope>DISULFIDE BONDS</scope>
    <source>
        <tissue>Venom</tissue>
    </source>
</reference>
<reference key="2">
    <citation type="journal article" date="2004" name="Toxicon">
        <title>Agatoxins: ion channel specific toxins from the American funnel web spider, Agelenopsis aperta.</title>
        <authorList>
            <person name="Adams M.E."/>
        </authorList>
    </citation>
    <scope>REVIEW</scope>
</reference>
<name>T4G1E_AGEAP</name>
<sequence length="37" mass="4208">ACVGENKQCADWAGPHCCDGYYCTCRYFPKCICRNNN</sequence>
<feature type="peptide" id="PRO_0000044959" description="Mu-agatoxin-Aa1e" evidence="1">
    <location>
        <begin position="1"/>
        <end position="37"/>
    </location>
</feature>
<feature type="modified residue" description="Asparagine amide" evidence="1">
    <location>
        <position position="37"/>
    </location>
</feature>
<feature type="disulfide bond" evidence="1">
    <location>
        <begin position="2"/>
        <end position="18"/>
    </location>
</feature>
<feature type="disulfide bond" evidence="1">
    <location>
        <begin position="9"/>
        <end position="23"/>
    </location>
</feature>
<feature type="disulfide bond" evidence="1">
    <location>
        <begin position="17"/>
        <end position="33"/>
    </location>
</feature>
<feature type="disulfide bond" evidence="1">
    <location>
        <begin position="25"/>
        <end position="31"/>
    </location>
</feature>